<proteinExistence type="predicted"/>
<dbReference type="EMBL" id="J04347">
    <property type="protein sequence ID" value="AAA47079.1"/>
    <property type="molecule type" value="Genomic_RNA"/>
</dbReference>
<dbReference type="PIR" id="B46322">
    <property type="entry name" value="B46322"/>
</dbReference>
<dbReference type="SMR" id="P33777"/>
<dbReference type="InterPro" id="IPR007968">
    <property type="entry name" value="Tobacco_rattle_virus_16kDa"/>
</dbReference>
<dbReference type="Pfam" id="PF05304">
    <property type="entry name" value="DUF728"/>
    <property type="match status" value="1"/>
</dbReference>
<reference key="1">
    <citation type="journal article" date="1989" name="Virology">
        <title>Genome structure of tobacco rattle virus strain PLB: further evidence on the occurrence of RNA recombination among tobraviruses.</title>
        <authorList>
            <person name="Angenent G.C."/>
            <person name="Posthumus E."/>
            <person name="Brederode F.T.M."/>
            <person name="Bol J.F."/>
        </authorList>
    </citation>
    <scope>NUCLEOTIDE SEQUENCE [GENOMIC RNA]</scope>
</reference>
<sequence length="141" mass="16331">MTCVLKGCVNEGTVLGHETCSIGHANKLRKQVADMVGVTRRCAENNCGWFVCVIVNDFTFDVYNCCGRSHLEKCRKRIEARNREIWKQIERIRAERSFATVKKSRNSKPSKKKFKERKEFGTPKRFLRDDVPLGIDQLFAF</sequence>
<accession>P33777</accession>
<organism>
    <name type="scientific">Tobacco rattle virus (strain PLB)</name>
    <dbReference type="NCBI Taxonomy" id="33766"/>
    <lineage>
        <taxon>Viruses</taxon>
        <taxon>Riboviria</taxon>
        <taxon>Orthornavirae</taxon>
        <taxon>Kitrinoviricota</taxon>
        <taxon>Alsuviricetes</taxon>
        <taxon>Martellivirales</taxon>
        <taxon>Virgaviridae</taxon>
        <taxon>Tobravirus</taxon>
        <taxon>Tobacco rattle virus</taxon>
    </lineage>
</organism>
<protein>
    <recommendedName>
        <fullName>16 kDa protein</fullName>
    </recommendedName>
</protein>
<name>V16K_TRVPL</name>
<feature type="chain" id="PRO_0000222509" description="16 kDa protein">
    <location>
        <begin position="1"/>
        <end position="141"/>
    </location>
</feature>
<feature type="region of interest" description="Disordered" evidence="1">
    <location>
        <begin position="100"/>
        <end position="119"/>
    </location>
</feature>
<feature type="compositionally biased region" description="Basic residues" evidence="1">
    <location>
        <begin position="102"/>
        <end position="115"/>
    </location>
</feature>
<evidence type="ECO:0000256" key="1">
    <source>
        <dbReference type="SAM" id="MobiDB-lite"/>
    </source>
</evidence>
<organismHost>
    <name type="scientific">Beta vulgaris</name>
    <name type="common">Sugar beet</name>
    <dbReference type="NCBI Taxonomy" id="161934"/>
</organismHost>
<organismHost>
    <name type="scientific">Capsicum annuum</name>
    <name type="common">Capsicum pepper</name>
    <dbReference type="NCBI Taxonomy" id="4072"/>
</organismHost>
<organismHost>
    <name type="scientific">Hyacinthus</name>
    <dbReference type="NCBI Taxonomy" id="82024"/>
</organismHost>
<organismHost>
    <name type="scientific">Narcissus pseudonarcissus</name>
    <name type="common">Daffodil</name>
    <dbReference type="NCBI Taxonomy" id="39639"/>
</organismHost>
<organismHost>
    <name type="scientific">Nicotiana tabacum</name>
    <name type="common">Common tobacco</name>
    <dbReference type="NCBI Taxonomy" id="4097"/>
</organismHost>
<organismHost>
    <name type="scientific">Solanum tuberosum</name>
    <name type="common">Potato</name>
    <dbReference type="NCBI Taxonomy" id="4113"/>
</organismHost>
<organismHost>
    <name type="scientific">Spinacia oleracea</name>
    <name type="common">Spinach</name>
    <dbReference type="NCBI Taxonomy" id="3562"/>
</organismHost>
<organismHost>
    <name type="scientific">Stellaria media</name>
    <name type="common">Common chickweed</name>
    <name type="synonym">Alsine media</name>
    <dbReference type="NCBI Taxonomy" id="13274"/>
</organismHost>
<organismHost>
    <name type="scientific">Tulipa</name>
    <dbReference type="NCBI Taxonomy" id="13305"/>
</organismHost>
<organismHost>
    <name type="scientific">Viola arvensis</name>
    <name type="common">European field pansy</name>
    <name type="synonym">Field violet</name>
    <dbReference type="NCBI Taxonomy" id="97415"/>
</organismHost>